<reference key="1">
    <citation type="journal article" date="2007" name="Nat. Biotechnol.">
        <title>Comparative analysis of the complete genome sequence of the plant growth-promoting bacterium Bacillus amyloliquefaciens FZB42.</title>
        <authorList>
            <person name="Chen X.H."/>
            <person name="Koumoutsi A."/>
            <person name="Scholz R."/>
            <person name="Eisenreich A."/>
            <person name="Schneider K."/>
            <person name="Heinemeyer I."/>
            <person name="Morgenstern B."/>
            <person name="Voss B."/>
            <person name="Hess W.R."/>
            <person name="Reva O."/>
            <person name="Junge H."/>
            <person name="Voigt B."/>
            <person name="Jungblut P.R."/>
            <person name="Vater J."/>
            <person name="Suessmuth R."/>
            <person name="Liesegang H."/>
            <person name="Strittmatter A."/>
            <person name="Gottschalk G."/>
            <person name="Borriss R."/>
        </authorList>
    </citation>
    <scope>NUCLEOTIDE SEQUENCE [LARGE SCALE GENOMIC DNA]</scope>
    <source>
        <strain>DSM 23117 / BGSC 10A6 / LMG 26770 / FZB42</strain>
    </source>
</reference>
<sequence>MSIKQYSQEQLKQMALVEIAHEIFSEHKKPVPFQELLNEMISLLGVTKEELGDRIAQFYTDLNIDGRFIALSDQTWGLRSWYPYDQLDEETQPTVKAKKKKAKKVVEEDLDLDEFEEVDEDDIDLDEIEEDIDLEADSFDDEDIDEEDDDELEIEDEMIEEDEEDYDDEEEDRKD</sequence>
<protein>
    <recommendedName>
        <fullName evidence="1">Probable DNA-directed RNA polymerase subunit delta</fullName>
    </recommendedName>
    <alternativeName>
        <fullName evidence="1">RNAP delta factor</fullName>
    </alternativeName>
</protein>
<comment type="function">
    <text evidence="1">Participates in both the initiation and recycling phases of transcription. In the presence of the delta subunit, RNAP displays an increased specificity of transcription, a decreased affinity for nucleic acids, and an increased efficiency of RNA synthesis because of enhanced recycling.</text>
</comment>
<comment type="subunit">
    <text evidence="1">RNAP is composed of a core of 2 alpha, a beta and a beta' subunits. The core is associated with a delta subunit and one of several sigma factors.</text>
</comment>
<comment type="similarity">
    <text evidence="1">Belongs to the RpoE family.</text>
</comment>
<name>RPOE_BACVZ</name>
<dbReference type="EMBL" id="CP000560">
    <property type="protein sequence ID" value="ABS75761.1"/>
    <property type="molecule type" value="Genomic_DNA"/>
</dbReference>
<dbReference type="RefSeq" id="WP_007407616.1">
    <property type="nucleotide sequence ID" value="NC_009725.2"/>
</dbReference>
<dbReference type="SMR" id="A7Z9T5"/>
<dbReference type="GeneID" id="93082576"/>
<dbReference type="KEGG" id="bay:RBAM_034320"/>
<dbReference type="HOGENOM" id="CLU_116648_1_0_9"/>
<dbReference type="Proteomes" id="UP000001120">
    <property type="component" value="Chromosome"/>
</dbReference>
<dbReference type="GO" id="GO:0000428">
    <property type="term" value="C:DNA-directed RNA polymerase complex"/>
    <property type="evidence" value="ECO:0007669"/>
    <property type="project" value="UniProtKB-KW"/>
</dbReference>
<dbReference type="GO" id="GO:0003899">
    <property type="term" value="F:DNA-directed RNA polymerase activity"/>
    <property type="evidence" value="ECO:0007669"/>
    <property type="project" value="UniProtKB-UniRule"/>
</dbReference>
<dbReference type="GO" id="GO:0006351">
    <property type="term" value="P:DNA-templated transcription"/>
    <property type="evidence" value="ECO:0007669"/>
    <property type="project" value="InterPro"/>
</dbReference>
<dbReference type="GO" id="GO:0006355">
    <property type="term" value="P:regulation of DNA-templated transcription"/>
    <property type="evidence" value="ECO:0007669"/>
    <property type="project" value="UniProtKB-UniRule"/>
</dbReference>
<dbReference type="Gene3D" id="1.10.10.1250">
    <property type="entry name" value="RNA polymerase, subunit delta, N-terminal domain"/>
    <property type="match status" value="1"/>
</dbReference>
<dbReference type="HAMAP" id="MF_00357">
    <property type="entry name" value="RNApol_bact_RpoE"/>
    <property type="match status" value="1"/>
</dbReference>
<dbReference type="InterPro" id="IPR007759">
    <property type="entry name" value="Asxl_HARE-HTH"/>
</dbReference>
<dbReference type="InterPro" id="IPR038087">
    <property type="entry name" value="RNAP_delta_N_dom_sf"/>
</dbReference>
<dbReference type="InterPro" id="IPR029757">
    <property type="entry name" value="RpoE"/>
</dbReference>
<dbReference type="NCBIfam" id="TIGR04567">
    <property type="entry name" value="RNAP_delt_lowGC"/>
    <property type="match status" value="1"/>
</dbReference>
<dbReference type="Pfam" id="PF05066">
    <property type="entry name" value="HARE-HTH"/>
    <property type="match status" value="1"/>
</dbReference>
<dbReference type="PROSITE" id="PS51913">
    <property type="entry name" value="HTH_HARE"/>
    <property type="match status" value="1"/>
</dbReference>
<feature type="chain" id="PRO_1000005873" description="Probable DNA-directed RNA polymerase subunit delta">
    <location>
        <begin position="1"/>
        <end position="175"/>
    </location>
</feature>
<feature type="domain" description="HTH HARE-type" evidence="2">
    <location>
        <begin position="14"/>
        <end position="81"/>
    </location>
</feature>
<feature type="region of interest" description="Disordered" evidence="3">
    <location>
        <begin position="110"/>
        <end position="175"/>
    </location>
</feature>
<gene>
    <name evidence="1" type="primary">rpoE</name>
    <name type="ordered locus">RBAM_034320</name>
</gene>
<evidence type="ECO:0000255" key="1">
    <source>
        <dbReference type="HAMAP-Rule" id="MF_00357"/>
    </source>
</evidence>
<evidence type="ECO:0000255" key="2">
    <source>
        <dbReference type="PROSITE-ProRule" id="PRU01261"/>
    </source>
</evidence>
<evidence type="ECO:0000256" key="3">
    <source>
        <dbReference type="SAM" id="MobiDB-lite"/>
    </source>
</evidence>
<organism>
    <name type="scientific">Bacillus velezensis (strain DSM 23117 / BGSC 10A6 / LMG 26770 / FZB42)</name>
    <name type="common">Bacillus amyloliquefaciens subsp. plantarum</name>
    <dbReference type="NCBI Taxonomy" id="326423"/>
    <lineage>
        <taxon>Bacteria</taxon>
        <taxon>Bacillati</taxon>
        <taxon>Bacillota</taxon>
        <taxon>Bacilli</taxon>
        <taxon>Bacillales</taxon>
        <taxon>Bacillaceae</taxon>
        <taxon>Bacillus</taxon>
        <taxon>Bacillus amyloliquefaciens group</taxon>
    </lineage>
</organism>
<keyword id="KW-0240">DNA-directed RNA polymerase</keyword>
<keyword id="KW-0548">Nucleotidyltransferase</keyword>
<keyword id="KW-0804">Transcription</keyword>
<keyword id="KW-0808">Transferase</keyword>
<accession>A7Z9T5</accession>
<proteinExistence type="inferred from homology"/>